<feature type="signal peptide" evidence="2">
    <location>
        <begin position="1"/>
        <end position="21"/>
    </location>
</feature>
<feature type="chain" id="PRO_0000006653" description="Cystatin-8">
    <location>
        <begin position="22"/>
        <end position="142"/>
    </location>
</feature>
<feature type="short sequence motif" description="Secondary area of contact" evidence="2">
    <location>
        <begin position="77"/>
        <end position="81"/>
    </location>
</feature>
<feature type="glycosylation site" description="N-linked (GlcNAc...) asparagine" evidence="2">
    <location>
        <position position="27"/>
    </location>
</feature>
<feature type="glycosylation site" description="N-linked (GlcNAc...) asparagine" evidence="3">
    <location>
        <position position="39"/>
    </location>
</feature>
<feature type="disulfide bond" evidence="1">
    <location>
        <begin position="95"/>
        <end position="105"/>
    </location>
</feature>
<feature type="disulfide bond" evidence="1">
    <location>
        <begin position="119"/>
        <end position="139"/>
    </location>
</feature>
<feature type="sequence variant" id="VAR_061130" description="In dbSNP:rs35190670.">
    <original>A</original>
    <variation>V</variation>
    <location>
        <position position="52"/>
    </location>
</feature>
<feature type="sequence variant" id="VAR_014527" description="In dbSNP:rs1054633.">
    <original>A</original>
    <variation>P</variation>
    <location>
        <position position="142"/>
    </location>
</feature>
<gene>
    <name type="primary">CST8</name>
    <name type="synonym">CRES</name>
</gene>
<proteinExistence type="evidence at protein level"/>
<protein>
    <recommendedName>
        <fullName>Cystatin-8</fullName>
    </recommendedName>
    <alternativeName>
        <fullName>Cystatin-related epididymal spermatogenic protein</fullName>
    </alternativeName>
</protein>
<accession>O60676</accession>
<accession>Q2M2X6</accession>
<reference key="1">
    <citation type="journal article" date="1995" name="Mol. Reprod. Dev.">
        <title>Transient appearance of CRES protein during spermatogenesis and caput epididymal sperm maturation.</title>
        <authorList>
            <person name="Cornwall G.A."/>
            <person name="Hann S.R."/>
        </authorList>
    </citation>
    <scope>NUCLEOTIDE SEQUENCE [MRNA]</scope>
    <source>
        <tissue>Testis</tissue>
    </source>
</reference>
<reference key="2">
    <citation type="journal article" date="2001" name="Nature">
        <title>The DNA sequence and comparative analysis of human chromosome 20.</title>
        <authorList>
            <person name="Deloukas P."/>
            <person name="Matthews L.H."/>
            <person name="Ashurst J.L."/>
            <person name="Burton J."/>
            <person name="Gilbert J.G.R."/>
            <person name="Jones M."/>
            <person name="Stavrides G."/>
            <person name="Almeida J.P."/>
            <person name="Babbage A.K."/>
            <person name="Bagguley C.L."/>
            <person name="Bailey J."/>
            <person name="Barlow K.F."/>
            <person name="Bates K.N."/>
            <person name="Beard L.M."/>
            <person name="Beare D.M."/>
            <person name="Beasley O.P."/>
            <person name="Bird C.P."/>
            <person name="Blakey S.E."/>
            <person name="Bridgeman A.M."/>
            <person name="Brown A.J."/>
            <person name="Buck D."/>
            <person name="Burrill W.D."/>
            <person name="Butler A.P."/>
            <person name="Carder C."/>
            <person name="Carter N.P."/>
            <person name="Chapman J.C."/>
            <person name="Clamp M."/>
            <person name="Clark G."/>
            <person name="Clark L.N."/>
            <person name="Clark S.Y."/>
            <person name="Clee C.M."/>
            <person name="Clegg S."/>
            <person name="Cobley V.E."/>
            <person name="Collier R.E."/>
            <person name="Connor R.E."/>
            <person name="Corby N.R."/>
            <person name="Coulson A."/>
            <person name="Coville G.J."/>
            <person name="Deadman R."/>
            <person name="Dhami P.D."/>
            <person name="Dunn M."/>
            <person name="Ellington A.G."/>
            <person name="Frankland J.A."/>
            <person name="Fraser A."/>
            <person name="French L."/>
            <person name="Garner P."/>
            <person name="Grafham D.V."/>
            <person name="Griffiths C."/>
            <person name="Griffiths M.N.D."/>
            <person name="Gwilliam R."/>
            <person name="Hall R.E."/>
            <person name="Hammond S."/>
            <person name="Harley J.L."/>
            <person name="Heath P.D."/>
            <person name="Ho S."/>
            <person name="Holden J.L."/>
            <person name="Howden P.J."/>
            <person name="Huckle E."/>
            <person name="Hunt A.R."/>
            <person name="Hunt S.E."/>
            <person name="Jekosch K."/>
            <person name="Johnson C.M."/>
            <person name="Johnson D."/>
            <person name="Kay M.P."/>
            <person name="Kimberley A.M."/>
            <person name="King A."/>
            <person name="Knights A."/>
            <person name="Laird G.K."/>
            <person name="Lawlor S."/>
            <person name="Lehvaeslaiho M.H."/>
            <person name="Leversha M.A."/>
            <person name="Lloyd C."/>
            <person name="Lloyd D.M."/>
            <person name="Lovell J.D."/>
            <person name="Marsh V.L."/>
            <person name="Martin S.L."/>
            <person name="McConnachie L.J."/>
            <person name="McLay K."/>
            <person name="McMurray A.A."/>
            <person name="Milne S.A."/>
            <person name="Mistry D."/>
            <person name="Moore M.J.F."/>
            <person name="Mullikin J.C."/>
            <person name="Nickerson T."/>
            <person name="Oliver K."/>
            <person name="Parker A."/>
            <person name="Patel R."/>
            <person name="Pearce T.A.V."/>
            <person name="Peck A.I."/>
            <person name="Phillimore B.J.C.T."/>
            <person name="Prathalingam S.R."/>
            <person name="Plumb R.W."/>
            <person name="Ramsay H."/>
            <person name="Rice C.M."/>
            <person name="Ross M.T."/>
            <person name="Scott C.E."/>
            <person name="Sehra H.K."/>
            <person name="Shownkeen R."/>
            <person name="Sims S."/>
            <person name="Skuce C.D."/>
            <person name="Smith M.L."/>
            <person name="Soderlund C."/>
            <person name="Steward C.A."/>
            <person name="Sulston J.E."/>
            <person name="Swann R.M."/>
            <person name="Sycamore N."/>
            <person name="Taylor R."/>
            <person name="Tee L."/>
            <person name="Thomas D.W."/>
            <person name="Thorpe A."/>
            <person name="Tracey A."/>
            <person name="Tromans A.C."/>
            <person name="Vaudin M."/>
            <person name="Wall M."/>
            <person name="Wallis J.M."/>
            <person name="Whitehead S.L."/>
            <person name="Whittaker P."/>
            <person name="Willey D.L."/>
            <person name="Williams L."/>
            <person name="Williams S.A."/>
            <person name="Wilming L."/>
            <person name="Wray P.W."/>
            <person name="Hubbard T."/>
            <person name="Durbin R.M."/>
            <person name="Bentley D.R."/>
            <person name="Beck S."/>
            <person name="Rogers J."/>
        </authorList>
    </citation>
    <scope>NUCLEOTIDE SEQUENCE [LARGE SCALE GENOMIC DNA]</scope>
</reference>
<reference key="3">
    <citation type="journal article" date="2004" name="Genome Res.">
        <title>The status, quality, and expansion of the NIH full-length cDNA project: the Mammalian Gene Collection (MGC).</title>
        <authorList>
            <consortium name="The MGC Project Team"/>
        </authorList>
    </citation>
    <scope>NUCLEOTIDE SEQUENCE [LARGE SCALE MRNA]</scope>
</reference>
<reference key="4">
    <citation type="journal article" date="2006" name="J. Proteome Res.">
        <title>Identification of N-linked glycoproteins in human saliva by glycoprotein capture and mass spectrometry.</title>
        <authorList>
            <person name="Ramachandran P."/>
            <person name="Boontheung P."/>
            <person name="Xie Y."/>
            <person name="Sondej M."/>
            <person name="Wong D.T."/>
            <person name="Loo J.A."/>
        </authorList>
    </citation>
    <scope>GLYCOSYLATION [LARGE SCALE ANALYSIS] AT ASN-39</scope>
    <source>
        <tissue>Saliva</tissue>
    </source>
</reference>
<name>CST8_HUMAN</name>
<evidence type="ECO:0000250" key="1"/>
<evidence type="ECO:0000255" key="2"/>
<evidence type="ECO:0000269" key="3">
    <source>
    </source>
</evidence>
<evidence type="ECO:0000305" key="4"/>
<keyword id="KW-1015">Disulfide bond</keyword>
<keyword id="KW-0325">Glycoprotein</keyword>
<keyword id="KW-0646">Protease inhibitor</keyword>
<keyword id="KW-1267">Proteomics identification</keyword>
<keyword id="KW-1185">Reference proteome</keyword>
<keyword id="KW-0964">Secreted</keyword>
<keyword id="KW-0732">Signal</keyword>
<keyword id="KW-0789">Thiol protease inhibitor</keyword>
<organism>
    <name type="scientific">Homo sapiens</name>
    <name type="common">Human</name>
    <dbReference type="NCBI Taxonomy" id="9606"/>
    <lineage>
        <taxon>Eukaryota</taxon>
        <taxon>Metazoa</taxon>
        <taxon>Chordata</taxon>
        <taxon>Craniata</taxon>
        <taxon>Vertebrata</taxon>
        <taxon>Euteleostomi</taxon>
        <taxon>Mammalia</taxon>
        <taxon>Eutheria</taxon>
        <taxon>Euarchontoglires</taxon>
        <taxon>Primates</taxon>
        <taxon>Haplorrhini</taxon>
        <taxon>Catarrhini</taxon>
        <taxon>Hominidae</taxon>
        <taxon>Homo</taxon>
    </lineage>
</organism>
<sequence>MPRCRWLSLILLTIPLALVARKDPKKNETGVLRKLKPVNASNANVKQCLWFAMQEYNKESEDKYVFLVVKTLQAQLQVTNLLEYLIDVEIARSDCRKPLSTNEICAIQENSKLKRKLSCSFLVGALPWNGEFTVMEKKCEDA</sequence>
<comment type="function">
    <text>Performs a specialized role during sperm development and maturation.</text>
</comment>
<comment type="subcellular location">
    <subcellularLocation>
        <location>Secreted</location>
    </subcellularLocation>
</comment>
<comment type="tissue specificity">
    <text>Proximal caput region of the epididymis. Lower expression in the testis. Within the testis it is localized to the elongating spermatids, whereas within the epididymis it is exclusively synthesized by the proximal caput epithelium.</text>
</comment>
<comment type="similarity">
    <text evidence="4">Belongs to the cystatin family.</text>
</comment>
<dbReference type="EMBL" id="AF059244">
    <property type="protein sequence ID" value="AAC14707.1"/>
    <property type="molecule type" value="mRNA"/>
</dbReference>
<dbReference type="EMBL" id="AL109954">
    <property type="status" value="NOT_ANNOTATED_CDS"/>
    <property type="molecule type" value="Genomic_DNA"/>
</dbReference>
<dbReference type="EMBL" id="BC069496">
    <property type="protein sequence ID" value="AAH69496.1"/>
    <property type="molecule type" value="mRNA"/>
</dbReference>
<dbReference type="EMBL" id="BC105113">
    <property type="protein sequence ID" value="AAI05114.1"/>
    <property type="molecule type" value="mRNA"/>
</dbReference>
<dbReference type="EMBL" id="BC105119">
    <property type="protein sequence ID" value="AAI05120.1"/>
    <property type="molecule type" value="mRNA"/>
</dbReference>
<dbReference type="CCDS" id="CCDS13156.1"/>
<dbReference type="RefSeq" id="NP_001268659.1">
    <property type="nucleotide sequence ID" value="NM_001281730.2"/>
</dbReference>
<dbReference type="RefSeq" id="NP_005483.1">
    <property type="nucleotide sequence ID" value="NM_005492.4"/>
</dbReference>
<dbReference type="RefSeq" id="XP_047295771.1">
    <property type="nucleotide sequence ID" value="XM_047439815.1"/>
</dbReference>
<dbReference type="RefSeq" id="XP_047295772.1">
    <property type="nucleotide sequence ID" value="XM_047439816.1"/>
</dbReference>
<dbReference type="RefSeq" id="XP_047295773.1">
    <property type="nucleotide sequence ID" value="XM_047439817.1"/>
</dbReference>
<dbReference type="RefSeq" id="XP_047295774.1">
    <property type="nucleotide sequence ID" value="XM_047439818.1"/>
</dbReference>
<dbReference type="RefSeq" id="XP_047295775.1">
    <property type="nucleotide sequence ID" value="XM_047439819.1"/>
</dbReference>
<dbReference type="RefSeq" id="XP_047295776.1">
    <property type="nucleotide sequence ID" value="XM_047439820.1"/>
</dbReference>
<dbReference type="RefSeq" id="XP_054178790.1">
    <property type="nucleotide sequence ID" value="XM_054322815.1"/>
</dbReference>
<dbReference type="RefSeq" id="XP_054178791.1">
    <property type="nucleotide sequence ID" value="XM_054322816.1"/>
</dbReference>
<dbReference type="RefSeq" id="XP_054178792.1">
    <property type="nucleotide sequence ID" value="XM_054322817.1"/>
</dbReference>
<dbReference type="RefSeq" id="XP_054178793.1">
    <property type="nucleotide sequence ID" value="XM_054322818.1"/>
</dbReference>
<dbReference type="RefSeq" id="XP_054178794.1">
    <property type="nucleotide sequence ID" value="XM_054322819.1"/>
</dbReference>
<dbReference type="SMR" id="O60676"/>
<dbReference type="BioGRID" id="115358">
    <property type="interactions" value="48"/>
</dbReference>
<dbReference type="FunCoup" id="O60676">
    <property type="interactions" value="21"/>
</dbReference>
<dbReference type="IntAct" id="O60676">
    <property type="interactions" value="44"/>
</dbReference>
<dbReference type="STRING" id="9606.ENSP00000246012"/>
<dbReference type="MEROPS" id="I25.027"/>
<dbReference type="GlyCosmos" id="O60676">
    <property type="glycosylation" value="2 sites, No reported glycans"/>
</dbReference>
<dbReference type="GlyGen" id="O60676">
    <property type="glycosylation" value="2 sites"/>
</dbReference>
<dbReference type="iPTMnet" id="O60676"/>
<dbReference type="PhosphoSitePlus" id="O60676"/>
<dbReference type="BioMuta" id="CST8"/>
<dbReference type="MassIVE" id="O60676"/>
<dbReference type="PaxDb" id="9606-ENSP00000246012"/>
<dbReference type="PeptideAtlas" id="O60676"/>
<dbReference type="ProteomicsDB" id="49521"/>
<dbReference type="Antibodypedia" id="1474">
    <property type="antibodies" value="228 antibodies from 31 providers"/>
</dbReference>
<dbReference type="DNASU" id="10047"/>
<dbReference type="Ensembl" id="ENST00000246012.2">
    <property type="protein sequence ID" value="ENSP00000246012.1"/>
    <property type="gene ID" value="ENSG00000125815.9"/>
</dbReference>
<dbReference type="GeneID" id="10047"/>
<dbReference type="KEGG" id="hsa:10047"/>
<dbReference type="MANE-Select" id="ENST00000246012.2">
    <property type="protein sequence ID" value="ENSP00000246012.1"/>
    <property type="RefSeq nucleotide sequence ID" value="NM_005492.4"/>
    <property type="RefSeq protein sequence ID" value="NP_005483.1"/>
</dbReference>
<dbReference type="UCSC" id="uc002wth.3">
    <property type="organism name" value="human"/>
</dbReference>
<dbReference type="AGR" id="HGNC:2480"/>
<dbReference type="CTD" id="10047"/>
<dbReference type="DisGeNET" id="10047"/>
<dbReference type="GeneCards" id="CST8"/>
<dbReference type="HGNC" id="HGNC:2480">
    <property type="gene designation" value="CST8"/>
</dbReference>
<dbReference type="HPA" id="ENSG00000125815">
    <property type="expression patterns" value="Tissue enriched (testis)"/>
</dbReference>
<dbReference type="MIM" id="608683">
    <property type="type" value="gene"/>
</dbReference>
<dbReference type="neXtProt" id="NX_O60676"/>
<dbReference type="OpenTargets" id="ENSG00000125815"/>
<dbReference type="PharmGKB" id="PA26981"/>
<dbReference type="VEuPathDB" id="HostDB:ENSG00000125815"/>
<dbReference type="eggNOG" id="ENOG502T6MT">
    <property type="taxonomic scope" value="Eukaryota"/>
</dbReference>
<dbReference type="GeneTree" id="ENSGT00940000162294"/>
<dbReference type="InParanoid" id="O60676"/>
<dbReference type="OMA" id="MKKQCVD"/>
<dbReference type="OrthoDB" id="1908104at2759"/>
<dbReference type="PAN-GO" id="O60676">
    <property type="GO annotations" value="3 GO annotations based on evolutionary models"/>
</dbReference>
<dbReference type="PhylomeDB" id="O60676"/>
<dbReference type="PathwayCommons" id="O60676"/>
<dbReference type="BioGRID-ORCS" id="10047">
    <property type="hits" value="16 hits in 1142 CRISPR screens"/>
</dbReference>
<dbReference type="GeneWiki" id="CST8_(gene)"/>
<dbReference type="GenomeRNAi" id="10047"/>
<dbReference type="Pharos" id="O60676">
    <property type="development level" value="Tbio"/>
</dbReference>
<dbReference type="PRO" id="PR:O60676"/>
<dbReference type="Proteomes" id="UP000005640">
    <property type="component" value="Chromosome 20"/>
</dbReference>
<dbReference type="RNAct" id="O60676">
    <property type="molecule type" value="protein"/>
</dbReference>
<dbReference type="Bgee" id="ENSG00000125815">
    <property type="expression patterns" value="Expressed in male germ line stem cell (sensu Vertebrata) in testis and 25 other cell types or tissues"/>
</dbReference>
<dbReference type="ExpressionAtlas" id="O60676">
    <property type="expression patterns" value="baseline and differential"/>
</dbReference>
<dbReference type="GO" id="GO:0009986">
    <property type="term" value="C:cell surface"/>
    <property type="evidence" value="ECO:0000318"/>
    <property type="project" value="GO_Central"/>
</dbReference>
<dbReference type="GO" id="GO:0005737">
    <property type="term" value="C:cytoplasm"/>
    <property type="evidence" value="ECO:0000318"/>
    <property type="project" value="GO_Central"/>
</dbReference>
<dbReference type="GO" id="GO:0005576">
    <property type="term" value="C:extracellular region"/>
    <property type="evidence" value="ECO:0000318"/>
    <property type="project" value="GO_Central"/>
</dbReference>
<dbReference type="GO" id="GO:0004869">
    <property type="term" value="F:cysteine-type endopeptidase inhibitor activity"/>
    <property type="evidence" value="ECO:0000304"/>
    <property type="project" value="ProtInc"/>
</dbReference>
<dbReference type="CDD" id="cd00042">
    <property type="entry name" value="CY"/>
    <property type="match status" value="1"/>
</dbReference>
<dbReference type="FunFam" id="3.10.450.10:FF:000026">
    <property type="entry name" value="CST8 isoform 2"/>
    <property type="match status" value="1"/>
</dbReference>
<dbReference type="Gene3D" id="3.10.450.10">
    <property type="match status" value="1"/>
</dbReference>
<dbReference type="InterPro" id="IPR000010">
    <property type="entry name" value="Cystatin_dom"/>
</dbReference>
<dbReference type="InterPro" id="IPR046350">
    <property type="entry name" value="Cystatin_sf"/>
</dbReference>
<dbReference type="InterPro" id="IPR052691">
    <property type="entry name" value="Sperm_Mat_Cystatin"/>
</dbReference>
<dbReference type="PANTHER" id="PTHR47010:SF1">
    <property type="entry name" value="CYSTATIN-8"/>
    <property type="match status" value="1"/>
</dbReference>
<dbReference type="PANTHER" id="PTHR47010">
    <property type="entry name" value="CYSTATIN-8-RELATED"/>
    <property type="match status" value="1"/>
</dbReference>
<dbReference type="Pfam" id="PF00031">
    <property type="entry name" value="Cystatin"/>
    <property type="match status" value="1"/>
</dbReference>
<dbReference type="SMART" id="SM00043">
    <property type="entry name" value="CY"/>
    <property type="match status" value="1"/>
</dbReference>
<dbReference type="SUPFAM" id="SSF54403">
    <property type="entry name" value="Cystatin/monellin"/>
    <property type="match status" value="1"/>
</dbReference>